<protein>
    <recommendedName>
        <fullName evidence="2">Photosystem I iron-sulfur center</fullName>
        <ecNumber evidence="2">1.97.1.12</ecNumber>
    </recommendedName>
    <alternativeName>
        <fullName evidence="2">9 kDa polypeptide</fullName>
    </alternativeName>
    <alternativeName>
        <fullName evidence="2">PSI-C</fullName>
    </alternativeName>
    <alternativeName>
        <fullName evidence="2">Photosystem I subunit VII</fullName>
    </alternativeName>
    <alternativeName>
        <fullName evidence="2">PsaC</fullName>
    </alternativeName>
</protein>
<keyword id="KW-0004">4Fe-4S</keyword>
<keyword id="KW-0249">Electron transport</keyword>
<keyword id="KW-0408">Iron</keyword>
<keyword id="KW-0411">Iron-sulfur</keyword>
<keyword id="KW-0472">Membrane</keyword>
<keyword id="KW-0479">Metal-binding</keyword>
<keyword id="KW-0560">Oxidoreductase</keyword>
<keyword id="KW-0602">Photosynthesis</keyword>
<keyword id="KW-0603">Photosystem I</keyword>
<keyword id="KW-0677">Repeat</keyword>
<keyword id="KW-0793">Thylakoid</keyword>
<keyword id="KW-0813">Transport</keyword>
<sequence length="82" mass="8935">MAHTVKIYDTCIGCTQCVRACPTDVLEMVPWKGNNKAGMIAAAPRTEDCVGCKRCETACPTDFLSIRVYLGPETTRSMGLAY</sequence>
<name>PSAC_SYNJA</name>
<proteinExistence type="inferred from homology"/>
<comment type="function">
    <text evidence="2">Apoprotein for the two 4Fe-4S centers FA and FB of photosystem I (PSI); essential for photochemical activity. FB is the terminal electron acceptor of PSI, donating electrons to ferredoxin. The C-terminus interacts with PsaA/B/D and helps assemble the protein into the PSI complex. Required for binding of PsaD and PsaE to PSI. PSI is a plastocyanin/cytochrome c6-ferredoxin oxidoreductase, converting photonic excitation into a charge separation, which transfers an electron from the donor P700 chlorophyll pair to the spectroscopically characterized acceptors A0, A1, FX, FA and FB in turn.</text>
</comment>
<comment type="catalytic activity">
    <reaction evidence="2">
        <text>reduced [plastocyanin] + hnu + oxidized [2Fe-2S]-[ferredoxin] = oxidized [plastocyanin] + reduced [2Fe-2S]-[ferredoxin]</text>
        <dbReference type="Rhea" id="RHEA:30407"/>
        <dbReference type="Rhea" id="RHEA-COMP:10000"/>
        <dbReference type="Rhea" id="RHEA-COMP:10001"/>
        <dbReference type="Rhea" id="RHEA-COMP:10039"/>
        <dbReference type="Rhea" id="RHEA-COMP:10040"/>
        <dbReference type="ChEBI" id="CHEBI:29036"/>
        <dbReference type="ChEBI" id="CHEBI:30212"/>
        <dbReference type="ChEBI" id="CHEBI:33737"/>
        <dbReference type="ChEBI" id="CHEBI:33738"/>
        <dbReference type="ChEBI" id="CHEBI:49552"/>
        <dbReference type="EC" id="1.97.1.12"/>
    </reaction>
</comment>
<comment type="cofactor">
    <cofactor evidence="2">
        <name>[4Fe-4S] cluster</name>
        <dbReference type="ChEBI" id="CHEBI:49883"/>
    </cofactor>
    <text evidence="2">Binds 2 [4Fe-4S] clusters. Cluster 2 is most probably the spectroscopically characterized electron acceptor FA and cluster 1 is most probably FB.</text>
</comment>
<comment type="subunit">
    <text evidence="2">The cyanobacterial PSI reaction center is composed of one copy each of PsaA,B,C,D,E,F,I,J,K,L,M and X, and forms trimeric complexes.</text>
</comment>
<comment type="subcellular location">
    <subcellularLocation>
        <location evidence="2">Cellular thylakoid membrane</location>
        <topology evidence="2">Peripheral membrane protein</topology>
        <orientation evidence="2">Cytoplasmic side</orientation>
    </subcellularLocation>
</comment>
<feature type="initiator methionine" description="Removed" evidence="1">
    <location>
        <position position="1"/>
    </location>
</feature>
<feature type="chain" id="PRO_0000292106" description="Photosystem I iron-sulfur center">
    <location>
        <begin position="2"/>
        <end position="82"/>
    </location>
</feature>
<feature type="domain" description="4Fe-4S ferredoxin-type 1" evidence="2">
    <location>
        <begin position="2"/>
        <end position="31"/>
    </location>
</feature>
<feature type="domain" description="4Fe-4S ferredoxin-type 2" evidence="2">
    <location>
        <begin position="40"/>
        <end position="69"/>
    </location>
</feature>
<feature type="binding site" evidence="2">
    <location>
        <position position="11"/>
    </location>
    <ligand>
        <name>[4Fe-4S] cluster</name>
        <dbReference type="ChEBI" id="CHEBI:49883"/>
        <label>1</label>
    </ligand>
</feature>
<feature type="binding site" evidence="2">
    <location>
        <position position="14"/>
    </location>
    <ligand>
        <name>[4Fe-4S] cluster</name>
        <dbReference type="ChEBI" id="CHEBI:49883"/>
        <label>1</label>
    </ligand>
</feature>
<feature type="binding site" evidence="2">
    <location>
        <position position="17"/>
    </location>
    <ligand>
        <name>[4Fe-4S] cluster</name>
        <dbReference type="ChEBI" id="CHEBI:49883"/>
        <label>1</label>
    </ligand>
</feature>
<feature type="binding site" evidence="2">
    <location>
        <position position="21"/>
    </location>
    <ligand>
        <name>[4Fe-4S] cluster</name>
        <dbReference type="ChEBI" id="CHEBI:49883"/>
        <label>2</label>
    </ligand>
</feature>
<feature type="binding site" evidence="2">
    <location>
        <position position="49"/>
    </location>
    <ligand>
        <name>[4Fe-4S] cluster</name>
        <dbReference type="ChEBI" id="CHEBI:49883"/>
        <label>2</label>
    </ligand>
</feature>
<feature type="binding site" evidence="2">
    <location>
        <position position="52"/>
    </location>
    <ligand>
        <name>[4Fe-4S] cluster</name>
        <dbReference type="ChEBI" id="CHEBI:49883"/>
        <label>2</label>
    </ligand>
</feature>
<feature type="binding site" evidence="2">
    <location>
        <position position="55"/>
    </location>
    <ligand>
        <name>[4Fe-4S] cluster</name>
        <dbReference type="ChEBI" id="CHEBI:49883"/>
        <label>2</label>
    </ligand>
</feature>
<feature type="binding site" evidence="2">
    <location>
        <position position="59"/>
    </location>
    <ligand>
        <name>[4Fe-4S] cluster</name>
        <dbReference type="ChEBI" id="CHEBI:49883"/>
        <label>1</label>
    </ligand>
</feature>
<organism>
    <name type="scientific">Synechococcus sp. (strain JA-3-3Ab)</name>
    <name type="common">Cyanobacteria bacterium Yellowstone A-Prime</name>
    <dbReference type="NCBI Taxonomy" id="321327"/>
    <lineage>
        <taxon>Bacteria</taxon>
        <taxon>Bacillati</taxon>
        <taxon>Cyanobacteriota</taxon>
        <taxon>Cyanophyceae</taxon>
        <taxon>Synechococcales</taxon>
        <taxon>Synechococcaceae</taxon>
        <taxon>Synechococcus</taxon>
    </lineage>
</organism>
<dbReference type="EC" id="1.97.1.12" evidence="2"/>
<dbReference type="EMBL" id="CP000239">
    <property type="protein sequence ID" value="ABC98710.1"/>
    <property type="molecule type" value="Genomic_DNA"/>
</dbReference>
<dbReference type="RefSeq" id="WP_011429399.1">
    <property type="nucleotide sequence ID" value="NC_007775.1"/>
</dbReference>
<dbReference type="SMR" id="Q2JWZ0"/>
<dbReference type="STRING" id="321327.CYA_0492"/>
<dbReference type="KEGG" id="cya:CYA_0492"/>
<dbReference type="eggNOG" id="COG1143">
    <property type="taxonomic scope" value="Bacteria"/>
</dbReference>
<dbReference type="HOGENOM" id="CLU_139698_8_0_3"/>
<dbReference type="OrthoDB" id="9804603at2"/>
<dbReference type="Proteomes" id="UP000008818">
    <property type="component" value="Chromosome"/>
</dbReference>
<dbReference type="GO" id="GO:0009522">
    <property type="term" value="C:photosystem I"/>
    <property type="evidence" value="ECO:0007669"/>
    <property type="project" value="UniProtKB-KW"/>
</dbReference>
<dbReference type="GO" id="GO:0031676">
    <property type="term" value="C:plasma membrane-derived thylakoid membrane"/>
    <property type="evidence" value="ECO:0007669"/>
    <property type="project" value="UniProtKB-SubCell"/>
</dbReference>
<dbReference type="GO" id="GO:0051539">
    <property type="term" value="F:4 iron, 4 sulfur cluster binding"/>
    <property type="evidence" value="ECO:0007669"/>
    <property type="project" value="UniProtKB-KW"/>
</dbReference>
<dbReference type="GO" id="GO:0009055">
    <property type="term" value="F:electron transfer activity"/>
    <property type="evidence" value="ECO:0007669"/>
    <property type="project" value="UniProtKB-UniRule"/>
</dbReference>
<dbReference type="GO" id="GO:0046872">
    <property type="term" value="F:metal ion binding"/>
    <property type="evidence" value="ECO:0007669"/>
    <property type="project" value="UniProtKB-KW"/>
</dbReference>
<dbReference type="GO" id="GO:0016491">
    <property type="term" value="F:oxidoreductase activity"/>
    <property type="evidence" value="ECO:0007669"/>
    <property type="project" value="UniProtKB-KW"/>
</dbReference>
<dbReference type="GO" id="GO:0009773">
    <property type="term" value="P:photosynthetic electron transport in photosystem I"/>
    <property type="evidence" value="ECO:0007669"/>
    <property type="project" value="InterPro"/>
</dbReference>
<dbReference type="Gene3D" id="3.30.70.20">
    <property type="match status" value="1"/>
</dbReference>
<dbReference type="HAMAP" id="MF_01303">
    <property type="entry name" value="PSI_PsaC"/>
    <property type="match status" value="1"/>
</dbReference>
<dbReference type="InterPro" id="IPR017896">
    <property type="entry name" value="4Fe4S_Fe-S-bd"/>
</dbReference>
<dbReference type="InterPro" id="IPR017900">
    <property type="entry name" value="4Fe4S_Fe_S_CS"/>
</dbReference>
<dbReference type="InterPro" id="IPR050157">
    <property type="entry name" value="PSI_iron-sulfur_center"/>
</dbReference>
<dbReference type="InterPro" id="IPR017491">
    <property type="entry name" value="PSI_PsaC"/>
</dbReference>
<dbReference type="NCBIfam" id="TIGR03048">
    <property type="entry name" value="PS_I_psaC"/>
    <property type="match status" value="1"/>
</dbReference>
<dbReference type="PANTHER" id="PTHR24960:SF79">
    <property type="entry name" value="PHOTOSYSTEM I IRON-SULFUR CENTER"/>
    <property type="match status" value="1"/>
</dbReference>
<dbReference type="PANTHER" id="PTHR24960">
    <property type="entry name" value="PHOTOSYSTEM I IRON-SULFUR CENTER-RELATED"/>
    <property type="match status" value="1"/>
</dbReference>
<dbReference type="Pfam" id="PF12838">
    <property type="entry name" value="Fer4_7"/>
    <property type="match status" value="1"/>
</dbReference>
<dbReference type="SUPFAM" id="SSF54862">
    <property type="entry name" value="4Fe-4S ferredoxins"/>
    <property type="match status" value="1"/>
</dbReference>
<dbReference type="PROSITE" id="PS00198">
    <property type="entry name" value="4FE4S_FER_1"/>
    <property type="match status" value="2"/>
</dbReference>
<dbReference type="PROSITE" id="PS51379">
    <property type="entry name" value="4FE4S_FER_2"/>
    <property type="match status" value="2"/>
</dbReference>
<accession>Q2JWZ0</accession>
<gene>
    <name evidence="2" type="primary">psaC</name>
    <name type="ordered locus">CYA_0492</name>
</gene>
<reference key="1">
    <citation type="journal article" date="2007" name="ISME J.">
        <title>Population level functional diversity in a microbial community revealed by comparative genomic and metagenomic analyses.</title>
        <authorList>
            <person name="Bhaya D."/>
            <person name="Grossman A.R."/>
            <person name="Steunou A.-S."/>
            <person name="Khuri N."/>
            <person name="Cohan F.M."/>
            <person name="Hamamura N."/>
            <person name="Melendrez M.C."/>
            <person name="Bateson M.M."/>
            <person name="Ward D.M."/>
            <person name="Heidelberg J.F."/>
        </authorList>
    </citation>
    <scope>NUCLEOTIDE SEQUENCE [LARGE SCALE GENOMIC DNA]</scope>
    <source>
        <strain>JA-3-3Ab</strain>
    </source>
</reference>
<evidence type="ECO:0000250" key="1"/>
<evidence type="ECO:0000255" key="2">
    <source>
        <dbReference type="HAMAP-Rule" id="MF_01303"/>
    </source>
</evidence>